<evidence type="ECO:0000255" key="1">
    <source>
        <dbReference type="HAMAP-Rule" id="MF_00375"/>
    </source>
</evidence>
<organism>
    <name type="scientific">Pyrobaculum arsenaticum (strain DSM 13514 / JCM 11321 / PZ6)</name>
    <dbReference type="NCBI Taxonomy" id="340102"/>
    <lineage>
        <taxon>Archaea</taxon>
        <taxon>Thermoproteota</taxon>
        <taxon>Thermoprotei</taxon>
        <taxon>Thermoproteales</taxon>
        <taxon>Thermoproteaceae</taxon>
        <taxon>Pyrobaculum</taxon>
    </lineage>
</organism>
<sequence length="423" mass="46055">MLFERARQVFPGGVNSPARALKHLPSSLVARAASGPYLYTDRGRLVDYCMAFGAIILGHAHPRVKRAVEEQLERGWIYALLTEQEVEFAEAIRRHMPSVEKMRIVNTGTEATMNAIRLARGYTKRDVIIKFDGNFHGSHDYVLVKAGSGAATWGIPTSAGVPQDVVKLTVVAPYNDVDAFLKAVKEVGDRLAAVIAEPVAGNYGLIIPDAEFLKALREETKRVGALLIFDEVITGFRLGLGGAQGRFGIRPDLTTLGKAVGGGFPIGIFGGRAEVMDLVAPSGPVYNAGTYNAHPVSVTAGLAVLKELETGEPFRTADEAAERLAKGIEDIAGRLGFDVVVKKIASMFQFYFKKGDVKTPQDVRESNEKMYLKLHEIALRHGVYLTPSQFEVNFTSAAHTREVVEETLAALEKAFQQLKTEIG</sequence>
<protein>
    <recommendedName>
        <fullName evidence="1">Glutamate-1-semialdehyde 2,1-aminomutase</fullName>
        <shortName evidence="1">GSA</shortName>
        <ecNumber evidence="1">5.4.3.8</ecNumber>
    </recommendedName>
    <alternativeName>
        <fullName evidence="1">Glutamate-1-semialdehyde aminotransferase</fullName>
        <shortName evidence="1">GSA-AT</shortName>
    </alternativeName>
</protein>
<proteinExistence type="inferred from homology"/>
<reference key="1">
    <citation type="submission" date="2007-04" db="EMBL/GenBank/DDBJ databases">
        <title>Complete sequence of Pyrobaculum arsenaticum DSM 13514.</title>
        <authorList>
            <consortium name="US DOE Joint Genome Institute"/>
            <person name="Copeland A."/>
            <person name="Lucas S."/>
            <person name="Lapidus A."/>
            <person name="Barry K."/>
            <person name="Glavina del Rio T."/>
            <person name="Dalin E."/>
            <person name="Tice H."/>
            <person name="Pitluck S."/>
            <person name="Chain P."/>
            <person name="Malfatti S."/>
            <person name="Shin M."/>
            <person name="Vergez L."/>
            <person name="Schmutz J."/>
            <person name="Larimer F."/>
            <person name="Land M."/>
            <person name="Hauser L."/>
            <person name="Kyrpides N."/>
            <person name="Mikhailova N."/>
            <person name="Cozen A.E."/>
            <person name="Fitz-Gibbon S.T."/>
            <person name="House C.H."/>
            <person name="Saltikov C."/>
            <person name="Lowe T.M."/>
            <person name="Richardson P."/>
        </authorList>
    </citation>
    <scope>NUCLEOTIDE SEQUENCE [LARGE SCALE GENOMIC DNA]</scope>
    <source>
        <strain>ATCC 700994 / DSM 13514 / JCM 11321 / PZ6</strain>
    </source>
</reference>
<keyword id="KW-0963">Cytoplasm</keyword>
<keyword id="KW-0413">Isomerase</keyword>
<keyword id="KW-0627">Porphyrin biosynthesis</keyword>
<keyword id="KW-0663">Pyridoxal phosphate</keyword>
<gene>
    <name evidence="1" type="primary">hemL</name>
    <name type="ordered locus">Pars_2254</name>
</gene>
<comment type="catalytic activity">
    <reaction evidence="1">
        <text>(S)-4-amino-5-oxopentanoate = 5-aminolevulinate</text>
        <dbReference type="Rhea" id="RHEA:14265"/>
        <dbReference type="ChEBI" id="CHEBI:57501"/>
        <dbReference type="ChEBI" id="CHEBI:356416"/>
        <dbReference type="EC" id="5.4.3.8"/>
    </reaction>
</comment>
<comment type="cofactor">
    <cofactor evidence="1">
        <name>pyridoxal 5'-phosphate</name>
        <dbReference type="ChEBI" id="CHEBI:597326"/>
    </cofactor>
</comment>
<comment type="pathway">
    <text evidence="1">Porphyrin-containing compound metabolism; protoporphyrin-IX biosynthesis; 5-aminolevulinate from L-glutamyl-tRNA(Glu): step 2/2.</text>
</comment>
<comment type="subcellular location">
    <subcellularLocation>
        <location evidence="1">Cytoplasm</location>
    </subcellularLocation>
</comment>
<comment type="similarity">
    <text evidence="1">Belongs to the class-III pyridoxal-phosphate-dependent aminotransferase family. HemL subfamily.</text>
</comment>
<accession>A4WN33</accession>
<dbReference type="EC" id="5.4.3.8" evidence="1"/>
<dbReference type="EMBL" id="CP000660">
    <property type="protein sequence ID" value="ABP51800.1"/>
    <property type="molecule type" value="Genomic_DNA"/>
</dbReference>
<dbReference type="RefSeq" id="WP_011901703.1">
    <property type="nucleotide sequence ID" value="NC_009376.1"/>
</dbReference>
<dbReference type="SMR" id="A4WN33"/>
<dbReference type="STRING" id="340102.Pars_2254"/>
<dbReference type="GeneID" id="5054286"/>
<dbReference type="KEGG" id="pas:Pars_2254"/>
<dbReference type="HOGENOM" id="CLU_016922_1_5_2"/>
<dbReference type="OrthoDB" id="6524at2157"/>
<dbReference type="PhylomeDB" id="A4WN33"/>
<dbReference type="UniPathway" id="UPA00251">
    <property type="reaction ID" value="UER00317"/>
</dbReference>
<dbReference type="Proteomes" id="UP000001567">
    <property type="component" value="Chromosome"/>
</dbReference>
<dbReference type="GO" id="GO:0005737">
    <property type="term" value="C:cytoplasm"/>
    <property type="evidence" value="ECO:0007669"/>
    <property type="project" value="UniProtKB-SubCell"/>
</dbReference>
<dbReference type="GO" id="GO:0042286">
    <property type="term" value="F:glutamate-1-semialdehyde 2,1-aminomutase activity"/>
    <property type="evidence" value="ECO:0007669"/>
    <property type="project" value="UniProtKB-UniRule"/>
</dbReference>
<dbReference type="GO" id="GO:0030170">
    <property type="term" value="F:pyridoxal phosphate binding"/>
    <property type="evidence" value="ECO:0007669"/>
    <property type="project" value="InterPro"/>
</dbReference>
<dbReference type="GO" id="GO:0008483">
    <property type="term" value="F:transaminase activity"/>
    <property type="evidence" value="ECO:0007669"/>
    <property type="project" value="InterPro"/>
</dbReference>
<dbReference type="GO" id="GO:0006782">
    <property type="term" value="P:protoporphyrinogen IX biosynthetic process"/>
    <property type="evidence" value="ECO:0007669"/>
    <property type="project" value="UniProtKB-UniRule"/>
</dbReference>
<dbReference type="CDD" id="cd00610">
    <property type="entry name" value="OAT_like"/>
    <property type="match status" value="1"/>
</dbReference>
<dbReference type="FunFam" id="3.40.640.10:FF:000021">
    <property type="entry name" value="Glutamate-1-semialdehyde 2,1-aminomutase"/>
    <property type="match status" value="1"/>
</dbReference>
<dbReference type="Gene3D" id="3.90.1150.10">
    <property type="entry name" value="Aspartate Aminotransferase, domain 1"/>
    <property type="match status" value="1"/>
</dbReference>
<dbReference type="Gene3D" id="3.40.640.10">
    <property type="entry name" value="Type I PLP-dependent aspartate aminotransferase-like (Major domain)"/>
    <property type="match status" value="1"/>
</dbReference>
<dbReference type="HAMAP" id="MF_00375">
    <property type="entry name" value="HemL_aminotrans_3"/>
    <property type="match status" value="1"/>
</dbReference>
<dbReference type="InterPro" id="IPR004639">
    <property type="entry name" value="4pyrrol_synth_GluAld_NH2Trfase"/>
</dbReference>
<dbReference type="InterPro" id="IPR005814">
    <property type="entry name" value="Aminotrans_3"/>
</dbReference>
<dbReference type="InterPro" id="IPR049704">
    <property type="entry name" value="Aminotrans_3_PPA_site"/>
</dbReference>
<dbReference type="InterPro" id="IPR015424">
    <property type="entry name" value="PyrdxlP-dep_Trfase"/>
</dbReference>
<dbReference type="InterPro" id="IPR015421">
    <property type="entry name" value="PyrdxlP-dep_Trfase_major"/>
</dbReference>
<dbReference type="InterPro" id="IPR015422">
    <property type="entry name" value="PyrdxlP-dep_Trfase_small"/>
</dbReference>
<dbReference type="NCBIfam" id="TIGR00713">
    <property type="entry name" value="hemL"/>
    <property type="match status" value="1"/>
</dbReference>
<dbReference type="NCBIfam" id="NF000818">
    <property type="entry name" value="PRK00062.1"/>
    <property type="match status" value="1"/>
</dbReference>
<dbReference type="PANTHER" id="PTHR43713">
    <property type="entry name" value="GLUTAMATE-1-SEMIALDEHYDE 2,1-AMINOMUTASE"/>
    <property type="match status" value="1"/>
</dbReference>
<dbReference type="PANTHER" id="PTHR43713:SF3">
    <property type="entry name" value="GLUTAMATE-1-SEMIALDEHYDE 2,1-AMINOMUTASE 1, CHLOROPLASTIC-RELATED"/>
    <property type="match status" value="1"/>
</dbReference>
<dbReference type="Pfam" id="PF00202">
    <property type="entry name" value="Aminotran_3"/>
    <property type="match status" value="1"/>
</dbReference>
<dbReference type="SUPFAM" id="SSF53383">
    <property type="entry name" value="PLP-dependent transferases"/>
    <property type="match status" value="1"/>
</dbReference>
<dbReference type="PROSITE" id="PS00600">
    <property type="entry name" value="AA_TRANSFER_CLASS_3"/>
    <property type="match status" value="1"/>
</dbReference>
<feature type="chain" id="PRO_0000382411" description="Glutamate-1-semialdehyde 2,1-aminomutase">
    <location>
        <begin position="1"/>
        <end position="423"/>
    </location>
</feature>
<feature type="modified residue" description="N6-(pyridoxal phosphate)lysine" evidence="1">
    <location>
        <position position="258"/>
    </location>
</feature>
<name>GSA_PYRAR</name>